<protein>
    <recommendedName>
        <fullName>Calcium-activated potassium channel subunit beta-4</fullName>
    </recommendedName>
    <alternativeName>
        <fullName>BK channel subunit beta-4</fullName>
        <shortName>BKbeta4</shortName>
        <shortName>Hbeta4</shortName>
    </alternativeName>
    <alternativeName>
        <fullName>Calcium-activated potassium channel, subfamily M subunit beta-4</fullName>
    </alternativeName>
    <alternativeName>
        <fullName>Charybdotoxin receptor subunit beta-4</fullName>
    </alternativeName>
    <alternativeName>
        <fullName>K(VCA)beta-4</fullName>
    </alternativeName>
    <alternativeName>
        <fullName>Maxi K channel subunit beta-4</fullName>
    </alternativeName>
    <alternativeName>
        <fullName>Slo-beta-4</fullName>
    </alternativeName>
</protein>
<proteinExistence type="evidence at protein level"/>
<organism>
    <name type="scientific">Homo sapiens</name>
    <name type="common">Human</name>
    <dbReference type="NCBI Taxonomy" id="9606"/>
    <lineage>
        <taxon>Eukaryota</taxon>
        <taxon>Metazoa</taxon>
        <taxon>Chordata</taxon>
        <taxon>Craniata</taxon>
        <taxon>Vertebrata</taxon>
        <taxon>Euteleostomi</taxon>
        <taxon>Mammalia</taxon>
        <taxon>Eutheria</taxon>
        <taxon>Euarchontoglires</taxon>
        <taxon>Primates</taxon>
        <taxon>Haplorrhini</taxon>
        <taxon>Catarrhini</taxon>
        <taxon>Hominidae</taxon>
        <taxon>Homo</taxon>
    </lineage>
</organism>
<dbReference type="EMBL" id="AF160967">
    <property type="protein sequence ID" value="AAF69805.1"/>
    <property type="molecule type" value="mRNA"/>
</dbReference>
<dbReference type="EMBL" id="AF170917">
    <property type="protein sequence ID" value="AAF89699.1"/>
    <property type="molecule type" value="mRNA"/>
</dbReference>
<dbReference type="EMBL" id="AF207992">
    <property type="protein sequence ID" value="AAF28333.1"/>
    <property type="molecule type" value="mRNA"/>
</dbReference>
<dbReference type="EMBL" id="AF215891">
    <property type="protein sequence ID" value="AAF75596.1"/>
    <property type="molecule type" value="mRNA"/>
</dbReference>
<dbReference type="EMBL" id="BC042446">
    <property type="protein sequence ID" value="AAH42446.2"/>
    <property type="molecule type" value="mRNA"/>
</dbReference>
<dbReference type="EMBL" id="BC050621">
    <property type="protein sequence ID" value="AAH50621.2"/>
    <property type="molecule type" value="mRNA"/>
</dbReference>
<dbReference type="CCDS" id="CCDS8997.1"/>
<dbReference type="RefSeq" id="NP_055320.4">
    <property type="nucleotide sequence ID" value="NM_014505.5"/>
</dbReference>
<dbReference type="PDB" id="5Y7L">
    <property type="method" value="NMR"/>
    <property type="chains" value="A=45-166"/>
</dbReference>
<dbReference type="PDB" id="6V22">
    <property type="method" value="EM"/>
    <property type="resolution" value="3.20 A"/>
    <property type="chains" value="E/F/G/H=1-210"/>
</dbReference>
<dbReference type="PDB" id="6V35">
    <property type="method" value="EM"/>
    <property type="resolution" value="3.50 A"/>
    <property type="chains" value="E/F/G/H=1-210"/>
</dbReference>
<dbReference type="PDB" id="9CZH">
    <property type="method" value="EM"/>
    <property type="resolution" value="2.90 A"/>
    <property type="chains" value="E/F/G/H=16-210"/>
</dbReference>
<dbReference type="PDB" id="9CZJ">
    <property type="method" value="EM"/>
    <property type="resolution" value="3.54 A"/>
    <property type="chains" value="E/F/G/H=16-210"/>
</dbReference>
<dbReference type="PDB" id="9CZK">
    <property type="method" value="EM"/>
    <property type="resolution" value="3.50 A"/>
    <property type="chains" value="E/F/G/H=16-210"/>
</dbReference>
<dbReference type="PDB" id="9CZM">
    <property type="method" value="EM"/>
    <property type="resolution" value="2.57 A"/>
    <property type="chains" value="E/F/G/H=16-210"/>
</dbReference>
<dbReference type="PDB" id="9CZO">
    <property type="method" value="EM"/>
    <property type="resolution" value="2.87 A"/>
    <property type="chains" value="E/F/G/H=16-210"/>
</dbReference>
<dbReference type="PDB" id="9CZQ">
    <property type="method" value="EM"/>
    <property type="resolution" value="2.88 A"/>
    <property type="chains" value="E/F/G/H=16-210"/>
</dbReference>
<dbReference type="PDB" id="9D18">
    <property type="method" value="EM"/>
    <property type="resolution" value="2.88 A"/>
    <property type="chains" value="E/F/G/H=16-210"/>
</dbReference>
<dbReference type="PDB" id="9D19">
    <property type="method" value="EM"/>
    <property type="resolution" value="2.88 A"/>
    <property type="chains" value="E/F/G/H=16-210"/>
</dbReference>
<dbReference type="PDBsum" id="5Y7L"/>
<dbReference type="PDBsum" id="6V22"/>
<dbReference type="PDBsum" id="6V35"/>
<dbReference type="PDBsum" id="9CZH"/>
<dbReference type="PDBsum" id="9CZJ"/>
<dbReference type="PDBsum" id="9CZK"/>
<dbReference type="PDBsum" id="9CZM"/>
<dbReference type="PDBsum" id="9CZO"/>
<dbReference type="PDBsum" id="9CZQ"/>
<dbReference type="PDBsum" id="9D18"/>
<dbReference type="PDBsum" id="9D19"/>
<dbReference type="EMDB" id="EMD-21025"/>
<dbReference type="EMDB" id="EMD-21028"/>
<dbReference type="EMDB" id="EMD-46416"/>
<dbReference type="EMDB" id="EMD-46418"/>
<dbReference type="EMDB" id="EMD-46419"/>
<dbReference type="EMDB" id="EMD-46421"/>
<dbReference type="EMDB" id="EMD-46423"/>
<dbReference type="EMDB" id="EMD-46425"/>
<dbReference type="SMR" id="Q86W47"/>
<dbReference type="BioGRID" id="118157">
    <property type="interactions" value="4"/>
</dbReference>
<dbReference type="FunCoup" id="Q86W47">
    <property type="interactions" value="556"/>
</dbReference>
<dbReference type="IntAct" id="Q86W47">
    <property type="interactions" value="3"/>
</dbReference>
<dbReference type="STRING" id="9606.ENSP00000258111"/>
<dbReference type="BindingDB" id="Q86W47"/>
<dbReference type="ChEMBL" id="CHEMBL4523376"/>
<dbReference type="DrugBank" id="DB02587">
    <property type="generic name" value="Colforsin"/>
</dbReference>
<dbReference type="DrugBank" id="DB01110">
    <property type="generic name" value="Miconazole"/>
</dbReference>
<dbReference type="DrugBank" id="DB01054">
    <property type="generic name" value="Nitrendipine"/>
</dbReference>
<dbReference type="DrugBank" id="DB00721">
    <property type="generic name" value="Procaine"/>
</dbReference>
<dbReference type="DrugBank" id="DB00867">
    <property type="generic name" value="Ritodrine"/>
</dbReference>
<dbReference type="DrugBank" id="DB08837">
    <property type="generic name" value="Tetraethylammonium"/>
</dbReference>
<dbReference type="DrugBank" id="DB09089">
    <property type="generic name" value="Trimebutine"/>
</dbReference>
<dbReference type="GlyCosmos" id="Q86W47">
    <property type="glycosylation" value="2 sites, No reported glycans"/>
</dbReference>
<dbReference type="GlyGen" id="Q86W47">
    <property type="glycosylation" value="2 sites"/>
</dbReference>
<dbReference type="iPTMnet" id="Q86W47"/>
<dbReference type="PhosphoSitePlus" id="Q86W47"/>
<dbReference type="SwissPalm" id="Q86W47"/>
<dbReference type="BioMuta" id="KCNMB4"/>
<dbReference type="DMDM" id="46395791"/>
<dbReference type="jPOST" id="Q86W47"/>
<dbReference type="MassIVE" id="Q86W47"/>
<dbReference type="PaxDb" id="9606-ENSP00000258111"/>
<dbReference type="PeptideAtlas" id="Q86W47"/>
<dbReference type="ProteomicsDB" id="70115"/>
<dbReference type="Pumba" id="Q86W47"/>
<dbReference type="ABCD" id="Q86W47">
    <property type="antibodies" value="1 sequenced antibody"/>
</dbReference>
<dbReference type="Antibodypedia" id="29474">
    <property type="antibodies" value="191 antibodies from 31 providers"/>
</dbReference>
<dbReference type="DNASU" id="27345"/>
<dbReference type="Ensembl" id="ENST00000258111.5">
    <property type="protein sequence ID" value="ENSP00000258111.4"/>
    <property type="gene ID" value="ENSG00000135643.5"/>
</dbReference>
<dbReference type="GeneID" id="27345"/>
<dbReference type="KEGG" id="hsa:27345"/>
<dbReference type="MANE-Select" id="ENST00000258111.5">
    <property type="protein sequence ID" value="ENSP00000258111.4"/>
    <property type="RefSeq nucleotide sequence ID" value="NM_014505.6"/>
    <property type="RefSeq protein sequence ID" value="NP_055320.4"/>
</dbReference>
<dbReference type="UCSC" id="uc001svx.4">
    <property type="organism name" value="human"/>
</dbReference>
<dbReference type="AGR" id="HGNC:6289"/>
<dbReference type="CTD" id="27345"/>
<dbReference type="DisGeNET" id="27345"/>
<dbReference type="GeneCards" id="KCNMB4"/>
<dbReference type="HGNC" id="HGNC:6289">
    <property type="gene designation" value="KCNMB4"/>
</dbReference>
<dbReference type="HPA" id="ENSG00000135643">
    <property type="expression patterns" value="Tissue enhanced (brain)"/>
</dbReference>
<dbReference type="MIM" id="605223">
    <property type="type" value="gene"/>
</dbReference>
<dbReference type="neXtProt" id="NX_Q86W47"/>
<dbReference type="OpenTargets" id="ENSG00000135643"/>
<dbReference type="PharmGKB" id="PA30069"/>
<dbReference type="VEuPathDB" id="HostDB:ENSG00000135643"/>
<dbReference type="eggNOG" id="ENOG502QR4Z">
    <property type="taxonomic scope" value="Eukaryota"/>
</dbReference>
<dbReference type="GeneTree" id="ENSGT00950000183039"/>
<dbReference type="HOGENOM" id="CLU_085739_0_0_1"/>
<dbReference type="InParanoid" id="Q86W47"/>
<dbReference type="OMA" id="SVMTWQQ"/>
<dbReference type="OrthoDB" id="9932001at2759"/>
<dbReference type="PAN-GO" id="Q86W47">
    <property type="GO annotations" value="4 GO annotations based on evolutionary models"/>
</dbReference>
<dbReference type="PhylomeDB" id="Q86W47"/>
<dbReference type="TreeFam" id="TF328589"/>
<dbReference type="PathwayCommons" id="Q86W47"/>
<dbReference type="Reactome" id="R-HSA-1296052">
    <property type="pathway name" value="Ca2+ activated K+ channels"/>
</dbReference>
<dbReference type="Reactome" id="R-HSA-418457">
    <property type="pathway name" value="cGMP effects"/>
</dbReference>
<dbReference type="SignaLink" id="Q86W47"/>
<dbReference type="BioGRID-ORCS" id="27345">
    <property type="hits" value="15 hits in 1158 CRISPR screens"/>
</dbReference>
<dbReference type="ChiTaRS" id="KCNMB4">
    <property type="organism name" value="human"/>
</dbReference>
<dbReference type="GeneWiki" id="KCNMB4"/>
<dbReference type="GenomeRNAi" id="27345"/>
<dbReference type="Pharos" id="Q86W47">
    <property type="development level" value="Tbio"/>
</dbReference>
<dbReference type="PRO" id="PR:Q86W47"/>
<dbReference type="Proteomes" id="UP000005640">
    <property type="component" value="Chromosome 12"/>
</dbReference>
<dbReference type="RNAct" id="Q86W47">
    <property type="molecule type" value="protein"/>
</dbReference>
<dbReference type="Bgee" id="ENSG00000135643">
    <property type="expression patterns" value="Expressed in endothelial cell and 150 other cell types or tissues"/>
</dbReference>
<dbReference type="ExpressionAtlas" id="Q86W47">
    <property type="expression patterns" value="baseline and differential"/>
</dbReference>
<dbReference type="GO" id="GO:0005886">
    <property type="term" value="C:plasma membrane"/>
    <property type="evidence" value="ECO:0000314"/>
    <property type="project" value="UniProtKB"/>
</dbReference>
<dbReference type="GO" id="GO:0045202">
    <property type="term" value="C:synapse"/>
    <property type="evidence" value="ECO:0007669"/>
    <property type="project" value="GOC"/>
</dbReference>
<dbReference type="GO" id="GO:0008076">
    <property type="term" value="C:voltage-gated potassium channel complex"/>
    <property type="evidence" value="ECO:0000314"/>
    <property type="project" value="UniProtKB"/>
</dbReference>
<dbReference type="GO" id="GO:0015269">
    <property type="term" value="F:calcium-activated potassium channel activity"/>
    <property type="evidence" value="ECO:0000314"/>
    <property type="project" value="UniProtKB"/>
</dbReference>
<dbReference type="GO" id="GO:0015459">
    <property type="term" value="F:potassium channel regulator activity"/>
    <property type="evidence" value="ECO:0000318"/>
    <property type="project" value="GO_Central"/>
</dbReference>
<dbReference type="GO" id="GO:0099508">
    <property type="term" value="F:voltage-gated monoatomic ion channel activity involved in regulation of presynaptic membrane potential"/>
    <property type="evidence" value="ECO:0007669"/>
    <property type="project" value="Ensembl"/>
</dbReference>
<dbReference type="GO" id="GO:0001508">
    <property type="term" value="P:action potential"/>
    <property type="evidence" value="ECO:0000314"/>
    <property type="project" value="UniProtKB"/>
</dbReference>
<dbReference type="GO" id="GO:0007268">
    <property type="term" value="P:chemical synaptic transmission"/>
    <property type="evidence" value="ECO:0000304"/>
    <property type="project" value="ProtInc"/>
</dbReference>
<dbReference type="GO" id="GO:0005513">
    <property type="term" value="P:detection of calcium ion"/>
    <property type="evidence" value="ECO:0000314"/>
    <property type="project" value="UniProtKB"/>
</dbReference>
<dbReference type="GO" id="GO:0019228">
    <property type="term" value="P:neuronal action potential"/>
    <property type="evidence" value="ECO:0000314"/>
    <property type="project" value="UniProtKB"/>
</dbReference>
<dbReference type="GO" id="GO:0006813">
    <property type="term" value="P:potassium ion transport"/>
    <property type="evidence" value="ECO:0000314"/>
    <property type="project" value="UniProtKB"/>
</dbReference>
<dbReference type="GO" id="GO:0046928">
    <property type="term" value="P:regulation of neurotransmitter secretion"/>
    <property type="evidence" value="ECO:0000304"/>
    <property type="project" value="UniProtKB"/>
</dbReference>
<dbReference type="GO" id="GO:0019229">
    <property type="term" value="P:regulation of vasoconstriction"/>
    <property type="evidence" value="ECO:0000304"/>
    <property type="project" value="UniProtKB"/>
</dbReference>
<dbReference type="InterPro" id="IPR003930">
    <property type="entry name" value="K_chnl_Ca-activ_BK_bsu"/>
</dbReference>
<dbReference type="PANTHER" id="PTHR10258">
    <property type="entry name" value="CALCIUM-ACTIVATED POTASSIUM CHANNEL SUBUNIT BETA"/>
    <property type="match status" value="1"/>
</dbReference>
<dbReference type="PANTHER" id="PTHR10258:SF3">
    <property type="entry name" value="CALCIUM-ACTIVATED POTASSIUM CHANNEL SUBUNIT BETA-4"/>
    <property type="match status" value="1"/>
</dbReference>
<dbReference type="Pfam" id="PF03185">
    <property type="entry name" value="CaKB"/>
    <property type="match status" value="1"/>
</dbReference>
<accession>Q86W47</accession>
<accession>Q8IVR3</accession>
<accession>Q9NPA4</accession>
<accession>Q9P0G5</accession>
<sequence length="210" mass="23949">MAKLRVAYEYTEAEDKSIRLGLFLIISGVVSLFIFGFCWLSPALQDLQATEANCTVLSVQQIGEVFECTFTCGADCRGTSQYPCVQVYVNNSESNSRALLHSDEHQLLTNPKCSYIPPCKRENQKNLESVMNWQQYWKDEIGSQPFTCYFNQHQRPDDVLLHRTHDEIVLLHCFLWPLVTFVVGVLIVVLTICAKSLAVKAEAMKKRKFS</sequence>
<comment type="function">
    <text evidence="2 3 5">Regulatory subunit of the calcium activated potassium KCNMA1 (maxiK) channel. Modulates the calcium sensitivity and gating kinetics of KCNMA1, thereby contributing to KCNMA1 channel diversity. Decreases the gating kinetics and calcium sensitivity of the KCNMA1 channel, but with fast deactivation kinetics. May decrease KCNMA1 channel openings at low calcium concentrations but increases channel openings at high calcium concentrations. Makes KCNMA1 channel resistant to 100 nM charybdotoxin (CTX) toxin concentrations.</text>
</comment>
<comment type="subunit">
    <text evidence="2 4 8">Interacts with KCNMA1 tetramer (PubMed:10692449, PubMed:10804197). There are probably 4 molecules of KCMNB4 per KCNMA1 tetramer (PubMed:10692449, PubMed:10804197). Interacts with FMR1 (via N-terminus) (PubMed:25561520).</text>
</comment>
<comment type="interaction">
    <interactant intactId="EBI-19112227">
        <id>Q86W47</id>
    </interactant>
    <interactant intactId="EBI-3932027">
        <id>P21145</id>
        <label>MAL</label>
    </interactant>
    <organismsDiffer>false</organismsDiffer>
    <experiments>3</experiments>
</comment>
<comment type="interaction">
    <interactant intactId="EBI-19112227">
        <id>Q86W47</id>
    </interactant>
    <interactant intactId="EBI-12070086">
        <id>Q5J8X5</id>
        <label>MS4A13</label>
    </interactant>
    <organismsDiffer>false</organismsDiffer>
    <experiments>3</experiments>
</comment>
<comment type="subcellular location">
    <subcellularLocation>
        <location>Membrane</location>
        <topology>Multi-pass membrane protein</topology>
    </subcellularLocation>
</comment>
<comment type="tissue specificity">
    <text evidence="2 5">Predominantly expressed in brain. In brain, it is expressed in the cerebellum, cerebral cortex, medulla, spinal cord, occipital pole, frontal lobe, temporal lobe, putamen, amygdala, caudate nucleus, corpus callosum, hippocampus, substantia nigra and thalamus. Weakly or not expressed in other tissues.</text>
</comment>
<comment type="domain">
    <text>Resistance to charybdotoxin (CTX) toxin is mediated by the extracellular domain.</text>
</comment>
<comment type="PTM">
    <text evidence="6">Phosphorylated. Phosphorylation modulates its effect on KCNMA1 activation kinetics.</text>
</comment>
<comment type="PTM">
    <text evidence="3 7">N-glycosylated. A highly glycosylated form is promoted by KCNMA1. Glycosylation, which is not required for the interaction with KCNMA1 and subcellular location, increases protection against charybdotoxin.</text>
</comment>
<comment type="miscellaneous">
    <text>Treatment with okadaic acid reduces its effect on KCNMA1.</text>
</comment>
<comment type="similarity">
    <text evidence="9">Belongs to the KCNMB (TC 8.A.14.1) family. KCNMB4 subfamily.</text>
</comment>
<evidence type="ECO:0000255" key="1"/>
<evidence type="ECO:0000269" key="2">
    <source>
    </source>
</evidence>
<evidence type="ECO:0000269" key="3">
    <source>
    </source>
</evidence>
<evidence type="ECO:0000269" key="4">
    <source>
    </source>
</evidence>
<evidence type="ECO:0000269" key="5">
    <source>
    </source>
</evidence>
<evidence type="ECO:0000269" key="6">
    <source>
    </source>
</evidence>
<evidence type="ECO:0000269" key="7">
    <source>
    </source>
</evidence>
<evidence type="ECO:0000269" key="8">
    <source>
    </source>
</evidence>
<evidence type="ECO:0000305" key="9"/>
<evidence type="ECO:0007829" key="10">
    <source>
        <dbReference type="PDB" id="5Y7L"/>
    </source>
</evidence>
<evidence type="ECO:0007829" key="11">
    <source>
        <dbReference type="PDB" id="6V22"/>
    </source>
</evidence>
<evidence type="ECO:0007829" key="12">
    <source>
        <dbReference type="PDB" id="6V35"/>
    </source>
</evidence>
<gene>
    <name type="primary">KCNMB4</name>
</gene>
<keyword id="KW-0002">3D-structure</keyword>
<keyword id="KW-0325">Glycoprotein</keyword>
<keyword id="KW-0407">Ion channel</keyword>
<keyword id="KW-0406">Ion transport</keyword>
<keyword id="KW-0472">Membrane</keyword>
<keyword id="KW-0597">Phosphoprotein</keyword>
<keyword id="KW-1267">Proteomics identification</keyword>
<keyword id="KW-1185">Reference proteome</keyword>
<keyword id="KW-0812">Transmembrane</keyword>
<keyword id="KW-1133">Transmembrane helix</keyword>
<keyword id="KW-0813">Transport</keyword>
<feature type="chain" id="PRO_0000187055" description="Calcium-activated potassium channel subunit beta-4">
    <location>
        <begin position="1"/>
        <end position="210"/>
    </location>
</feature>
<feature type="topological domain" description="Cytoplasmic" evidence="1">
    <location>
        <begin position="1"/>
        <end position="19"/>
    </location>
</feature>
<feature type="transmembrane region" description="Helical; Name=1" evidence="1">
    <location>
        <begin position="20"/>
        <end position="40"/>
    </location>
</feature>
<feature type="topological domain" description="Extracellular" evidence="1">
    <location>
        <begin position="41"/>
        <end position="167"/>
    </location>
</feature>
<feature type="transmembrane region" description="Helical; Name=2" evidence="1">
    <location>
        <begin position="168"/>
        <end position="188"/>
    </location>
</feature>
<feature type="topological domain" description="Cytoplasmic" evidence="1">
    <location>
        <begin position="189"/>
        <end position="210"/>
    </location>
</feature>
<feature type="glycosylation site" description="N-linked (GlcNAc...) asparagine">
    <location>
        <position position="53"/>
    </location>
</feature>
<feature type="glycosylation site" description="N-linked (GlcNAc...) asparagine">
    <location>
        <position position="90"/>
    </location>
</feature>
<feature type="sequence variant" id="VAR_018178" evidence="3">
    <original>V</original>
    <variation>I</variation>
    <location>
        <position position="199"/>
    </location>
</feature>
<feature type="mutagenesis site" description="Suppresses the effect of okadaic acid and increases activation time constant; when associated with A-17 and A-210." evidence="6">
    <original>T</original>
    <variation>A</variation>
    <location>
        <position position="11"/>
    </location>
</feature>
<feature type="mutagenesis site" description="Suppresses its effect on KCNMA1 channel activation and on deactivation kinetics; when associated with E-17 and E-210." evidence="6">
    <original>T</original>
    <variation>D</variation>
    <location>
        <position position="11"/>
    </location>
</feature>
<feature type="mutagenesis site" description="Suppresses the effect of okadaic acid and increases activation time constant; when associated with A-11 and A-210." evidence="6">
    <original>S</original>
    <variation>A</variation>
    <location>
        <position position="17"/>
    </location>
</feature>
<feature type="mutagenesis site" description="Suppresses its effect on KCNMA1 channel activation and on deactivation kinetics; when associated with D-11 and E-210." evidence="6">
    <original>S</original>
    <variation>E</variation>
    <location>
        <position position="17"/>
    </location>
</feature>
<feature type="mutagenesis site" description="Loss of N-glycosylation and reduced protection against charybdotoxin; when associated with A-90." evidence="7">
    <original>N</original>
    <variation>A</variation>
    <location>
        <position position="53"/>
    </location>
</feature>
<feature type="mutagenesis site" description="Loss of N-glycosylation and reduced protection against charybdotoxin; when associated with A-53." evidence="7">
    <original>N</original>
    <variation>A</variation>
    <location>
        <position position="90"/>
    </location>
</feature>
<feature type="mutagenesis site" description="Suppresses the effect of okadaic acid and increases activation time constant; when associated with A-11 and A-17." evidence="6">
    <original>S</original>
    <variation>A</variation>
    <location>
        <position position="210"/>
    </location>
</feature>
<feature type="mutagenesis site" description="Suppresses its effect on KCNMA1 channel activation and on deactivation kinetics; when associated with D-11 and E-17." evidence="6">
    <original>S</original>
    <variation>E</variation>
    <location>
        <position position="210"/>
    </location>
</feature>
<feature type="helix" evidence="11">
    <location>
        <begin position="12"/>
        <end position="38"/>
    </location>
</feature>
<feature type="helix" evidence="11">
    <location>
        <begin position="40"/>
        <end position="48"/>
    </location>
</feature>
<feature type="strand" evidence="11">
    <location>
        <begin position="49"/>
        <end position="61"/>
    </location>
</feature>
<feature type="strand" evidence="10">
    <location>
        <begin position="66"/>
        <end position="72"/>
    </location>
</feature>
<feature type="strand" evidence="12">
    <location>
        <begin position="73"/>
        <end position="75"/>
    </location>
</feature>
<feature type="strand" evidence="10">
    <location>
        <begin position="76"/>
        <end position="83"/>
    </location>
</feature>
<feature type="strand" evidence="11">
    <location>
        <begin position="85"/>
        <end position="94"/>
    </location>
</feature>
<feature type="strand" evidence="11">
    <location>
        <begin position="96"/>
        <end position="102"/>
    </location>
</feature>
<feature type="helix" evidence="11">
    <location>
        <begin position="104"/>
        <end position="109"/>
    </location>
</feature>
<feature type="helix" evidence="11">
    <location>
        <begin position="123"/>
        <end position="139"/>
    </location>
</feature>
<feature type="strand" evidence="11">
    <location>
        <begin position="142"/>
        <end position="144"/>
    </location>
</feature>
<feature type="strand" evidence="11">
    <location>
        <begin position="146"/>
        <end position="151"/>
    </location>
</feature>
<feature type="turn" evidence="11">
    <location>
        <begin position="152"/>
        <end position="154"/>
    </location>
</feature>
<feature type="strand" evidence="11">
    <location>
        <begin position="155"/>
        <end position="162"/>
    </location>
</feature>
<feature type="helix" evidence="11">
    <location>
        <begin position="169"/>
        <end position="203"/>
    </location>
</feature>
<name>KCMB4_HUMAN</name>
<reference key="1">
    <citation type="journal article" date="2000" name="Proc. Natl. Acad. Sci. U.S.A.">
        <title>A neuronal beta subunit (KCNMB4) makes the large conductance, voltage- and Ca2+-activated K+ channel resistant to charybdotoxin and iberiotoxin.</title>
        <authorList>
            <person name="Meera P."/>
            <person name="Wallner M."/>
            <person name="Toro L."/>
        </authorList>
    </citation>
    <scope>NUCLEOTIDE SEQUENCE [MRNA]</scope>
    <scope>FUNCTION</scope>
    <scope>GLYCOSYLATION</scope>
    <scope>VARIANT ILE-199</scope>
</reference>
<reference key="2">
    <citation type="journal article" date="2000" name="FEBS Lett.">
        <title>hKCNMB3 and hKCNMB4, cloning and characterization of two members of the large-conductance calcium-activated potassium channel beta subunit family.</title>
        <authorList>
            <person name="Behrens R."/>
            <person name="Nolting A."/>
            <person name="Reimann F."/>
            <person name="Schwarz M."/>
            <person name="Waldschuetz R."/>
            <person name="Pongs O."/>
        </authorList>
    </citation>
    <scope>NUCLEOTIDE SEQUENCE [MRNA]</scope>
    <scope>FUNCTION</scope>
    <scope>TISSUE SPECIFICITY</scope>
</reference>
<reference key="3">
    <citation type="journal article" date="2000" name="J. Biol. Chem.">
        <title>Cloning and functional characterization of novel large conductance calcium-activated potassium channel beta subunits, hKCNMB3 and hKCNMB4.</title>
        <authorList>
            <person name="Brenner R."/>
            <person name="Jegla T.J."/>
            <person name="Wickenden A."/>
            <person name="Liu Y."/>
            <person name="Aldrich R.W."/>
        </authorList>
    </citation>
    <scope>NUCLEOTIDE SEQUENCE [MRNA]</scope>
    <scope>FUNCTION</scope>
    <scope>INTERACTION WITH KCNMA1</scope>
    <scope>TISSUE SPECIFICITY</scope>
</reference>
<reference key="4">
    <citation type="journal article" date="2000" name="J. Neurosci.">
        <title>A novel nervous system beta subunit that downregulates human large conductance calcium-dependent potassium channels.</title>
        <authorList>
            <person name="Weiger T.M."/>
            <person name="Holmqvist M.H."/>
            <person name="Levitan I.B."/>
            <person name="Clark F.T."/>
            <person name="Sprague S."/>
            <person name="Huang W.-J."/>
            <person name="Ge P."/>
            <person name="Wang C."/>
            <person name="Lawson D."/>
            <person name="Jurman M.E."/>
            <person name="Glucksmann M.A."/>
            <person name="Silos-Santiago I."/>
            <person name="DiStefano P.S."/>
            <person name="Curtis R."/>
        </authorList>
    </citation>
    <scope>NUCLEOTIDE SEQUENCE [MRNA]</scope>
    <scope>INTERACTION WITH KCNMA1</scope>
    <source>
        <tissue>CNS</tissue>
    </source>
</reference>
<reference key="5">
    <citation type="journal article" date="2004" name="Genome Res.">
        <title>The status, quality, and expansion of the NIH full-length cDNA project: the Mammalian Gene Collection (MGC).</title>
        <authorList>
            <consortium name="The MGC Project Team"/>
        </authorList>
    </citation>
    <scope>NUCLEOTIDE SEQUENCE [LARGE SCALE MRNA]</scope>
    <source>
        <tissue>Eye</tissue>
        <tissue>Lymph</tissue>
    </source>
</reference>
<reference key="6">
    <citation type="journal article" date="2002" name="J. Biol. Chem.">
        <title>Phosphorylation-dependent functional coupling of hSlo calcium-dependent potassium channel and its hbeta 4 subunit.</title>
        <authorList>
            <person name="Jin P."/>
            <person name="Weiger T.M."/>
            <person name="Wu Y."/>
            <person name="Levitan I.B."/>
        </authorList>
    </citation>
    <scope>PHOSPHORYLATION</scope>
    <scope>MUTAGENESIS OF THR-11; SER-17 AND SER-210</scope>
</reference>
<reference key="7">
    <citation type="journal article" date="2002" name="J. Biol. Chem.">
        <title>Reciprocal modulation between the alpha and beta 4 subunits of hSlo calcium-dependent potassium channels.</title>
        <authorList>
            <person name="Jin P."/>
            <person name="Weiger T.M."/>
            <person name="Levitan I.B."/>
        </authorList>
    </citation>
    <scope>GLYCOSYLATION</scope>
    <scope>MUTAGENESIS OF ASN-53 AND ASN-90</scope>
</reference>
<reference key="8">
    <citation type="journal article" date="2002" name="News Physiol. Sci.">
        <title>New disguises for an old channel: MaxiK channel beta-subunits.</title>
        <authorList>
            <person name="Orio P."/>
            <person name="Rojas P."/>
            <person name="Ferreira G."/>
            <person name="Latorre R."/>
        </authorList>
    </citation>
    <scope>REVIEW</scope>
</reference>
<reference key="9">
    <citation type="journal article" date="2015" name="Proc. Natl. Acad. Sci. U.S.A.">
        <title>Independent role for presynaptic FMRP revealed by an FMR1 missense mutation associated with intellectual disability and seizures.</title>
        <authorList>
            <person name="Myrick L.K."/>
            <person name="Deng P.Y."/>
            <person name="Hashimoto H."/>
            <person name="Oh Y.M."/>
            <person name="Cho Y."/>
            <person name="Poidevin M.J."/>
            <person name="Suhl J.A."/>
            <person name="Visootsak J."/>
            <person name="Cavalli V."/>
            <person name="Jin P."/>
            <person name="Cheng X."/>
            <person name="Warren S.T."/>
            <person name="Klyachko V.A."/>
        </authorList>
    </citation>
    <scope>INTERACTION WITH FMR1</scope>
</reference>